<accession>C6C190</accession>
<sequence length="110" mass="12405">MEARAIAKYMRISPRKVRLVAENIKGKPVEEALNILKFTPKKGAEMLSKVLYSAVANAEQIPGVDVDSLCVDIVKVDEGPTWKRIQPRAMGRAYRIRKRTSHITVVVKEM</sequence>
<keyword id="KW-1185">Reference proteome</keyword>
<keyword id="KW-0687">Ribonucleoprotein</keyword>
<keyword id="KW-0689">Ribosomal protein</keyword>
<keyword id="KW-0694">RNA-binding</keyword>
<keyword id="KW-0699">rRNA-binding</keyword>
<proteinExistence type="inferred from homology"/>
<evidence type="ECO:0000255" key="1">
    <source>
        <dbReference type="HAMAP-Rule" id="MF_01331"/>
    </source>
</evidence>
<evidence type="ECO:0000305" key="2"/>
<gene>
    <name evidence="1" type="primary">rplV</name>
    <name type="ordered locus">Desal_1190</name>
</gene>
<comment type="function">
    <text evidence="1">This protein binds specifically to 23S rRNA; its binding is stimulated by other ribosomal proteins, e.g. L4, L17, and L20. It is important during the early stages of 50S assembly. It makes multiple contacts with different domains of the 23S rRNA in the assembled 50S subunit and ribosome (By similarity).</text>
</comment>
<comment type="function">
    <text evidence="1">The globular domain of the protein is located near the polypeptide exit tunnel on the outside of the subunit, while an extended beta-hairpin is found that lines the wall of the exit tunnel in the center of the 70S ribosome.</text>
</comment>
<comment type="subunit">
    <text evidence="1">Part of the 50S ribosomal subunit.</text>
</comment>
<comment type="similarity">
    <text evidence="1">Belongs to the universal ribosomal protein uL22 family.</text>
</comment>
<organism>
    <name type="scientific">Maridesulfovibrio salexigens (strain ATCC 14822 / DSM 2638 / NCIMB 8403 / VKM B-1763)</name>
    <name type="common">Desulfovibrio salexigens</name>
    <dbReference type="NCBI Taxonomy" id="526222"/>
    <lineage>
        <taxon>Bacteria</taxon>
        <taxon>Pseudomonadati</taxon>
        <taxon>Thermodesulfobacteriota</taxon>
        <taxon>Desulfovibrionia</taxon>
        <taxon>Desulfovibrionales</taxon>
        <taxon>Desulfovibrionaceae</taxon>
        <taxon>Maridesulfovibrio</taxon>
    </lineage>
</organism>
<reference key="1">
    <citation type="submission" date="2009-06" db="EMBL/GenBank/DDBJ databases">
        <title>Complete sequence of Desulfovibrio salexigens DSM 2638.</title>
        <authorList>
            <consortium name="US DOE Joint Genome Institute"/>
            <person name="Lucas S."/>
            <person name="Copeland A."/>
            <person name="Lapidus A."/>
            <person name="Glavina del Rio T."/>
            <person name="Tice H."/>
            <person name="Bruce D."/>
            <person name="Goodwin L."/>
            <person name="Pitluck S."/>
            <person name="Munk A.C."/>
            <person name="Brettin T."/>
            <person name="Detter J.C."/>
            <person name="Han C."/>
            <person name="Tapia R."/>
            <person name="Larimer F."/>
            <person name="Land M."/>
            <person name="Hauser L."/>
            <person name="Kyrpides N."/>
            <person name="Anderson I."/>
            <person name="Wall J.D."/>
            <person name="Arkin A.P."/>
            <person name="Dehal P."/>
            <person name="Chivian D."/>
            <person name="Giles B."/>
            <person name="Hazen T.C."/>
        </authorList>
    </citation>
    <scope>NUCLEOTIDE SEQUENCE [LARGE SCALE GENOMIC DNA]</scope>
    <source>
        <strain>ATCC 14822 / DSM 2638 / NCIMB 8403 / VKM B-1763</strain>
    </source>
</reference>
<feature type="chain" id="PRO_1000214599" description="Large ribosomal subunit protein uL22">
    <location>
        <begin position="1"/>
        <end position="110"/>
    </location>
</feature>
<protein>
    <recommendedName>
        <fullName evidence="1">Large ribosomal subunit protein uL22</fullName>
    </recommendedName>
    <alternativeName>
        <fullName evidence="2">50S ribosomal protein L22</fullName>
    </alternativeName>
</protein>
<name>RL22_MARSD</name>
<dbReference type="EMBL" id="CP001649">
    <property type="protein sequence ID" value="ACS79253.1"/>
    <property type="molecule type" value="Genomic_DNA"/>
</dbReference>
<dbReference type="RefSeq" id="WP_015851072.1">
    <property type="nucleotide sequence ID" value="NC_012881.1"/>
</dbReference>
<dbReference type="SMR" id="C6C190"/>
<dbReference type="STRING" id="526222.Desal_1190"/>
<dbReference type="KEGG" id="dsa:Desal_1190"/>
<dbReference type="eggNOG" id="COG0091">
    <property type="taxonomic scope" value="Bacteria"/>
</dbReference>
<dbReference type="HOGENOM" id="CLU_083987_3_3_7"/>
<dbReference type="OrthoDB" id="9805969at2"/>
<dbReference type="Proteomes" id="UP000002601">
    <property type="component" value="Chromosome"/>
</dbReference>
<dbReference type="GO" id="GO:0022625">
    <property type="term" value="C:cytosolic large ribosomal subunit"/>
    <property type="evidence" value="ECO:0007669"/>
    <property type="project" value="TreeGrafter"/>
</dbReference>
<dbReference type="GO" id="GO:0019843">
    <property type="term" value="F:rRNA binding"/>
    <property type="evidence" value="ECO:0007669"/>
    <property type="project" value="UniProtKB-UniRule"/>
</dbReference>
<dbReference type="GO" id="GO:0003735">
    <property type="term" value="F:structural constituent of ribosome"/>
    <property type="evidence" value="ECO:0007669"/>
    <property type="project" value="InterPro"/>
</dbReference>
<dbReference type="GO" id="GO:0006412">
    <property type="term" value="P:translation"/>
    <property type="evidence" value="ECO:0007669"/>
    <property type="project" value="UniProtKB-UniRule"/>
</dbReference>
<dbReference type="CDD" id="cd00336">
    <property type="entry name" value="Ribosomal_L22"/>
    <property type="match status" value="1"/>
</dbReference>
<dbReference type="FunFam" id="3.90.470.10:FF:000011">
    <property type="entry name" value="50S ribosomal protein L22"/>
    <property type="match status" value="1"/>
</dbReference>
<dbReference type="Gene3D" id="3.90.470.10">
    <property type="entry name" value="Ribosomal protein L22/L17"/>
    <property type="match status" value="1"/>
</dbReference>
<dbReference type="HAMAP" id="MF_01331_B">
    <property type="entry name" value="Ribosomal_uL22_B"/>
    <property type="match status" value="1"/>
</dbReference>
<dbReference type="InterPro" id="IPR001063">
    <property type="entry name" value="Ribosomal_uL22"/>
</dbReference>
<dbReference type="InterPro" id="IPR005727">
    <property type="entry name" value="Ribosomal_uL22_bac/chlpt-type"/>
</dbReference>
<dbReference type="InterPro" id="IPR047867">
    <property type="entry name" value="Ribosomal_uL22_bac/org-type"/>
</dbReference>
<dbReference type="InterPro" id="IPR018260">
    <property type="entry name" value="Ribosomal_uL22_CS"/>
</dbReference>
<dbReference type="InterPro" id="IPR036394">
    <property type="entry name" value="Ribosomal_uL22_sf"/>
</dbReference>
<dbReference type="NCBIfam" id="TIGR01044">
    <property type="entry name" value="rplV_bact"/>
    <property type="match status" value="1"/>
</dbReference>
<dbReference type="PANTHER" id="PTHR13501">
    <property type="entry name" value="CHLOROPLAST 50S RIBOSOMAL PROTEIN L22-RELATED"/>
    <property type="match status" value="1"/>
</dbReference>
<dbReference type="PANTHER" id="PTHR13501:SF8">
    <property type="entry name" value="LARGE RIBOSOMAL SUBUNIT PROTEIN UL22M"/>
    <property type="match status" value="1"/>
</dbReference>
<dbReference type="Pfam" id="PF00237">
    <property type="entry name" value="Ribosomal_L22"/>
    <property type="match status" value="1"/>
</dbReference>
<dbReference type="SUPFAM" id="SSF54843">
    <property type="entry name" value="Ribosomal protein L22"/>
    <property type="match status" value="1"/>
</dbReference>
<dbReference type="PROSITE" id="PS00464">
    <property type="entry name" value="RIBOSOMAL_L22"/>
    <property type="match status" value="1"/>
</dbReference>